<gene>
    <name evidence="1" type="primary">cmoA</name>
    <name type="ordered locus">PputW619_1078</name>
</gene>
<comment type="function">
    <text evidence="1">Catalyzes the conversion of S-adenosyl-L-methionine (SAM) to carboxy-S-adenosyl-L-methionine (Cx-SAM).</text>
</comment>
<comment type="catalytic activity">
    <reaction evidence="1">
        <text>prephenate + S-adenosyl-L-methionine = carboxy-S-adenosyl-L-methionine + 3-phenylpyruvate + H2O</text>
        <dbReference type="Rhea" id="RHEA:51692"/>
        <dbReference type="ChEBI" id="CHEBI:15377"/>
        <dbReference type="ChEBI" id="CHEBI:18005"/>
        <dbReference type="ChEBI" id="CHEBI:29934"/>
        <dbReference type="ChEBI" id="CHEBI:59789"/>
        <dbReference type="ChEBI" id="CHEBI:134278"/>
    </reaction>
</comment>
<comment type="subunit">
    <text evidence="1">Homodimer.</text>
</comment>
<comment type="similarity">
    <text evidence="1">Belongs to the class I-like SAM-binding methyltransferase superfamily. Cx-SAM synthase family.</text>
</comment>
<evidence type="ECO:0000255" key="1">
    <source>
        <dbReference type="HAMAP-Rule" id="MF_01589"/>
    </source>
</evidence>
<reference key="1">
    <citation type="submission" date="2008-02" db="EMBL/GenBank/DDBJ databases">
        <title>Complete sequence of Pseudomonas putida W619.</title>
        <authorList>
            <person name="Copeland A."/>
            <person name="Lucas S."/>
            <person name="Lapidus A."/>
            <person name="Barry K."/>
            <person name="Detter J.C."/>
            <person name="Glavina del Rio T."/>
            <person name="Dalin E."/>
            <person name="Tice H."/>
            <person name="Pitluck S."/>
            <person name="Chain P."/>
            <person name="Malfatti S."/>
            <person name="Shin M."/>
            <person name="Vergez L."/>
            <person name="Schmutz J."/>
            <person name="Larimer F."/>
            <person name="Land M."/>
            <person name="Hauser L."/>
            <person name="Kyrpides N."/>
            <person name="Kim E."/>
            <person name="Taghavi S."/>
            <person name="Vangronsveld D."/>
            <person name="van der Lelie D."/>
            <person name="Richardson P."/>
        </authorList>
    </citation>
    <scope>NUCLEOTIDE SEQUENCE [LARGE SCALE GENOMIC DNA]</scope>
    <source>
        <strain>W619</strain>
    </source>
</reference>
<keyword id="KW-0949">S-adenosyl-L-methionine</keyword>
<keyword id="KW-0808">Transferase</keyword>
<feature type="chain" id="PRO_1000201360" description="Carboxy-S-adenosyl-L-methionine synthase">
    <location>
        <begin position="1"/>
        <end position="247"/>
    </location>
</feature>
<feature type="binding site" evidence="1">
    <location>
        <position position="40"/>
    </location>
    <ligand>
        <name>S-adenosyl-L-methionine</name>
        <dbReference type="ChEBI" id="CHEBI:59789"/>
    </ligand>
</feature>
<feature type="binding site" evidence="1">
    <location>
        <begin position="65"/>
        <end position="67"/>
    </location>
    <ligand>
        <name>S-adenosyl-L-methionine</name>
        <dbReference type="ChEBI" id="CHEBI:59789"/>
    </ligand>
</feature>
<feature type="binding site" evidence="1">
    <location>
        <begin position="90"/>
        <end position="91"/>
    </location>
    <ligand>
        <name>S-adenosyl-L-methionine</name>
        <dbReference type="ChEBI" id="CHEBI:59789"/>
    </ligand>
</feature>
<feature type="binding site" evidence="1">
    <location>
        <begin position="122"/>
        <end position="123"/>
    </location>
    <ligand>
        <name>S-adenosyl-L-methionine</name>
        <dbReference type="ChEBI" id="CHEBI:59789"/>
    </ligand>
</feature>
<feature type="binding site" evidence="1">
    <location>
        <position position="137"/>
    </location>
    <ligand>
        <name>S-adenosyl-L-methionine</name>
        <dbReference type="ChEBI" id="CHEBI:59789"/>
    </ligand>
</feature>
<feature type="binding site" evidence="1">
    <location>
        <position position="204"/>
    </location>
    <ligand>
        <name>S-adenosyl-L-methionine</name>
        <dbReference type="ChEBI" id="CHEBI:59789"/>
    </ligand>
</feature>
<accession>B1J4E5</accession>
<protein>
    <recommendedName>
        <fullName evidence="1">Carboxy-S-adenosyl-L-methionine synthase</fullName>
        <shortName evidence="1">Cx-SAM synthase</shortName>
        <ecNumber evidence="1">2.1.3.-</ecNumber>
    </recommendedName>
</protein>
<organism>
    <name type="scientific">Pseudomonas putida (strain W619)</name>
    <dbReference type="NCBI Taxonomy" id="390235"/>
    <lineage>
        <taxon>Bacteria</taxon>
        <taxon>Pseudomonadati</taxon>
        <taxon>Pseudomonadota</taxon>
        <taxon>Gammaproteobacteria</taxon>
        <taxon>Pseudomonadales</taxon>
        <taxon>Pseudomonadaceae</taxon>
        <taxon>Pseudomonas</taxon>
    </lineage>
</organism>
<proteinExistence type="inferred from homology"/>
<dbReference type="EC" id="2.1.3.-" evidence="1"/>
<dbReference type="EMBL" id="CP000949">
    <property type="protein sequence ID" value="ACA71583.1"/>
    <property type="molecule type" value="Genomic_DNA"/>
</dbReference>
<dbReference type="SMR" id="B1J4E5"/>
<dbReference type="STRING" id="390235.PputW619_1078"/>
<dbReference type="KEGG" id="ppw:PputW619_1078"/>
<dbReference type="eggNOG" id="COG2226">
    <property type="taxonomic scope" value="Bacteria"/>
</dbReference>
<dbReference type="HOGENOM" id="CLU_078475_0_0_6"/>
<dbReference type="OrthoDB" id="9779941at2"/>
<dbReference type="GO" id="GO:0016743">
    <property type="term" value="F:carboxyl- or carbamoyltransferase activity"/>
    <property type="evidence" value="ECO:0007669"/>
    <property type="project" value="UniProtKB-UniRule"/>
</dbReference>
<dbReference type="GO" id="GO:1904047">
    <property type="term" value="F:S-adenosyl-L-methionine binding"/>
    <property type="evidence" value="ECO:0007669"/>
    <property type="project" value="UniProtKB-UniRule"/>
</dbReference>
<dbReference type="GO" id="GO:0002098">
    <property type="term" value="P:tRNA wobble uridine modification"/>
    <property type="evidence" value="ECO:0007669"/>
    <property type="project" value="InterPro"/>
</dbReference>
<dbReference type="CDD" id="cd02440">
    <property type="entry name" value="AdoMet_MTases"/>
    <property type="match status" value="1"/>
</dbReference>
<dbReference type="Gene3D" id="3.40.50.150">
    <property type="entry name" value="Vaccinia Virus protein VP39"/>
    <property type="match status" value="1"/>
</dbReference>
<dbReference type="HAMAP" id="MF_01589">
    <property type="entry name" value="Cx_SAM_synthase"/>
    <property type="match status" value="1"/>
</dbReference>
<dbReference type="InterPro" id="IPR005271">
    <property type="entry name" value="CmoA"/>
</dbReference>
<dbReference type="InterPro" id="IPR041698">
    <property type="entry name" value="Methyltransf_25"/>
</dbReference>
<dbReference type="InterPro" id="IPR029063">
    <property type="entry name" value="SAM-dependent_MTases_sf"/>
</dbReference>
<dbReference type="NCBIfam" id="TIGR00740">
    <property type="entry name" value="carboxy-S-adenosyl-L-methionine synthase CmoA"/>
    <property type="match status" value="1"/>
</dbReference>
<dbReference type="NCBIfam" id="NF011995">
    <property type="entry name" value="PRK15451.1"/>
    <property type="match status" value="1"/>
</dbReference>
<dbReference type="PANTHER" id="PTHR43861:SF2">
    <property type="entry name" value="CARBOXY-S-ADENOSYL-L-METHIONINE SYNTHASE"/>
    <property type="match status" value="1"/>
</dbReference>
<dbReference type="PANTHER" id="PTHR43861">
    <property type="entry name" value="TRANS-ACONITATE 2-METHYLTRANSFERASE-RELATED"/>
    <property type="match status" value="1"/>
</dbReference>
<dbReference type="Pfam" id="PF13649">
    <property type="entry name" value="Methyltransf_25"/>
    <property type="match status" value="1"/>
</dbReference>
<dbReference type="PIRSF" id="PIRSF006325">
    <property type="entry name" value="MeTrfase_bac"/>
    <property type="match status" value="1"/>
</dbReference>
<dbReference type="SUPFAM" id="SSF53335">
    <property type="entry name" value="S-adenosyl-L-methionine-dependent methyltransferases"/>
    <property type="match status" value="1"/>
</dbReference>
<name>CMOA_PSEPW</name>
<sequence>MSKQPDRLFAQPLEQVPDFVFNEDVVRVFPDMIKRSVPGYPTIVENLGVLAARFAQPNTALYDLGASLGAVTQSLRRHVRSEGCRVIAVDNSAAMVERCRQYLTAQDSMFQELLPVQVLDADILALPFEPASVVAMNFTLQFIAPEQRLALLSRIRQALLPGGALILSEKLHFADDQEQNLLNELHLDFKRANGYSELEIAQKRSAIENVMKPDTLHTHTERLRAAGFSKVVPWFQCLNFASLIALP</sequence>